<organism>
    <name type="scientific">Bartonella bacilliformis (strain ATCC 35685 / KC583 / Herrer 020/F12,63)</name>
    <dbReference type="NCBI Taxonomy" id="360095"/>
    <lineage>
        <taxon>Bacteria</taxon>
        <taxon>Pseudomonadati</taxon>
        <taxon>Pseudomonadota</taxon>
        <taxon>Alphaproteobacteria</taxon>
        <taxon>Hyphomicrobiales</taxon>
        <taxon>Bartonellaceae</taxon>
        <taxon>Bartonella</taxon>
    </lineage>
</organism>
<gene>
    <name type="ordered locus">BARBAKC583_0642</name>
</gene>
<feature type="chain" id="PRO_1000013065" description="Putative membrane protein insertion efficiency factor">
    <location>
        <begin position="1"/>
        <end position="117"/>
    </location>
</feature>
<proteinExistence type="inferred from homology"/>
<accession>A1USJ3</accession>
<name>YIDD_BARBK</name>
<evidence type="ECO:0000255" key="1">
    <source>
        <dbReference type="HAMAP-Rule" id="MF_00386"/>
    </source>
</evidence>
<comment type="function">
    <text evidence="1">Could be involved in insertion of integral membrane proteins into the membrane.</text>
</comment>
<comment type="subcellular location">
    <subcellularLocation>
        <location evidence="1">Cell inner membrane</location>
        <topology evidence="1">Peripheral membrane protein</topology>
        <orientation evidence="1">Cytoplasmic side</orientation>
    </subcellularLocation>
</comment>
<comment type="similarity">
    <text evidence="1">Belongs to the UPF0161 family.</text>
</comment>
<protein>
    <recommendedName>
        <fullName evidence="1">Putative membrane protein insertion efficiency factor</fullName>
    </recommendedName>
</protein>
<keyword id="KW-0997">Cell inner membrane</keyword>
<keyword id="KW-1003">Cell membrane</keyword>
<keyword id="KW-0472">Membrane</keyword>
<sequence>MIEQHPKQGKIQTRNYAGPWRKTPGRLLGTGLIRLYQITLSNFIGNQCRYMPTCSEYTYEAIARHGLWAGAWMGLFRIVCCNPFGTHGFDPVPTSLGSSYYFYKPWCYRKISTKHNK</sequence>
<dbReference type="EMBL" id="CP000524">
    <property type="protein sequence ID" value="ABM45001.1"/>
    <property type="molecule type" value="Genomic_DNA"/>
</dbReference>
<dbReference type="STRING" id="360095.BARBAKC583_0642"/>
<dbReference type="GeneID" id="4684458"/>
<dbReference type="KEGG" id="bbk:BARBAKC583_0642"/>
<dbReference type="PATRIC" id="fig|360095.6.peg.626"/>
<dbReference type="eggNOG" id="COG0759">
    <property type="taxonomic scope" value="Bacteria"/>
</dbReference>
<dbReference type="HOGENOM" id="CLU_144811_0_1_5"/>
<dbReference type="OrthoDB" id="9801753at2"/>
<dbReference type="Proteomes" id="UP000000643">
    <property type="component" value="Chromosome"/>
</dbReference>
<dbReference type="GO" id="GO:0005886">
    <property type="term" value="C:plasma membrane"/>
    <property type="evidence" value="ECO:0007669"/>
    <property type="project" value="UniProtKB-SubCell"/>
</dbReference>
<dbReference type="HAMAP" id="MF_00386">
    <property type="entry name" value="UPF0161_YidD"/>
    <property type="match status" value="1"/>
</dbReference>
<dbReference type="InterPro" id="IPR002696">
    <property type="entry name" value="Membr_insert_effic_factor_YidD"/>
</dbReference>
<dbReference type="NCBIfam" id="TIGR00278">
    <property type="entry name" value="membrane protein insertion efficiency factor YidD"/>
    <property type="match status" value="1"/>
</dbReference>
<dbReference type="PANTHER" id="PTHR33383">
    <property type="entry name" value="MEMBRANE PROTEIN INSERTION EFFICIENCY FACTOR-RELATED"/>
    <property type="match status" value="1"/>
</dbReference>
<dbReference type="PANTHER" id="PTHR33383:SF1">
    <property type="entry name" value="MEMBRANE PROTEIN INSERTION EFFICIENCY FACTOR-RELATED"/>
    <property type="match status" value="1"/>
</dbReference>
<dbReference type="Pfam" id="PF01809">
    <property type="entry name" value="YidD"/>
    <property type="match status" value="1"/>
</dbReference>
<dbReference type="SMART" id="SM01234">
    <property type="entry name" value="Haemolytic"/>
    <property type="match status" value="1"/>
</dbReference>
<reference key="1">
    <citation type="submission" date="2006-12" db="EMBL/GenBank/DDBJ databases">
        <authorList>
            <person name="Hendrix L."/>
            <person name="Mohamoud Y."/>
            <person name="Radune D."/>
            <person name="Shvartsbeyn A."/>
            <person name="Daugherty S."/>
            <person name="Dodson R."/>
            <person name="Durkin A.S."/>
            <person name="Harkins D."/>
            <person name="Huot H."/>
            <person name="Kothari S.P."/>
            <person name="Madupu R."/>
            <person name="Li J."/>
            <person name="Nelson W.C."/>
            <person name="Shrivastava S."/>
            <person name="Giglio M.G."/>
            <person name="Haft D."/>
            <person name="Selengut J."/>
            <person name="Fraser-Ligget C."/>
            <person name="Seshadri R."/>
        </authorList>
    </citation>
    <scope>NUCLEOTIDE SEQUENCE [LARGE SCALE GENOMIC DNA]</scope>
    <source>
        <strain>ATCC 35685 / KC583 / Herrer 020/F12,63</strain>
    </source>
</reference>